<protein>
    <recommendedName>
        <fullName>UDP-glycosyltransferase 90A1</fullName>
        <ecNumber>2.4.1.-</ecNumber>
    </recommendedName>
</protein>
<keyword id="KW-0025">Alternative splicing</keyword>
<keyword id="KW-0328">Glycosyltransferase</keyword>
<keyword id="KW-1185">Reference proteome</keyword>
<keyword id="KW-0808">Transferase</keyword>
<accession>Q9ZVX4</accession>
<accession>Q8LED6</accession>
<accession>Q93Y26</accession>
<reference key="1">
    <citation type="journal article" date="1999" name="Nature">
        <title>Sequence and analysis of chromosome 2 of the plant Arabidopsis thaliana.</title>
        <authorList>
            <person name="Lin X."/>
            <person name="Kaul S."/>
            <person name="Rounsley S.D."/>
            <person name="Shea T.P."/>
            <person name="Benito M.-I."/>
            <person name="Town C.D."/>
            <person name="Fujii C.Y."/>
            <person name="Mason T.M."/>
            <person name="Bowman C.L."/>
            <person name="Barnstead M.E."/>
            <person name="Feldblyum T.V."/>
            <person name="Buell C.R."/>
            <person name="Ketchum K.A."/>
            <person name="Lee J.J."/>
            <person name="Ronning C.M."/>
            <person name="Koo H.L."/>
            <person name="Moffat K.S."/>
            <person name="Cronin L.A."/>
            <person name="Shen M."/>
            <person name="Pai G."/>
            <person name="Van Aken S."/>
            <person name="Umayam L."/>
            <person name="Tallon L.J."/>
            <person name="Gill J.E."/>
            <person name="Adams M.D."/>
            <person name="Carrera A.J."/>
            <person name="Creasy T.H."/>
            <person name="Goodman H.M."/>
            <person name="Somerville C.R."/>
            <person name="Copenhaver G.P."/>
            <person name="Preuss D."/>
            <person name="Nierman W.C."/>
            <person name="White O."/>
            <person name="Eisen J.A."/>
            <person name="Salzberg S.L."/>
            <person name="Fraser C.M."/>
            <person name="Venter J.C."/>
        </authorList>
    </citation>
    <scope>NUCLEOTIDE SEQUENCE [LARGE SCALE GENOMIC DNA]</scope>
    <source>
        <strain>cv. Columbia</strain>
    </source>
</reference>
<reference key="2">
    <citation type="journal article" date="2017" name="Plant J.">
        <title>Araport11: a complete reannotation of the Arabidopsis thaliana reference genome.</title>
        <authorList>
            <person name="Cheng C.Y."/>
            <person name="Krishnakumar V."/>
            <person name="Chan A.P."/>
            <person name="Thibaud-Nissen F."/>
            <person name="Schobel S."/>
            <person name="Town C.D."/>
        </authorList>
    </citation>
    <scope>GENOME REANNOTATION</scope>
    <source>
        <strain>cv. Columbia</strain>
    </source>
</reference>
<reference key="3">
    <citation type="journal article" date="2003" name="Science">
        <title>Empirical analysis of transcriptional activity in the Arabidopsis genome.</title>
        <authorList>
            <person name="Yamada K."/>
            <person name="Lim J."/>
            <person name="Dale J.M."/>
            <person name="Chen H."/>
            <person name="Shinn P."/>
            <person name="Palm C.J."/>
            <person name="Southwick A.M."/>
            <person name="Wu H.C."/>
            <person name="Kim C.J."/>
            <person name="Nguyen M."/>
            <person name="Pham P.K."/>
            <person name="Cheuk R.F."/>
            <person name="Karlin-Newmann G."/>
            <person name="Liu S.X."/>
            <person name="Lam B."/>
            <person name="Sakano H."/>
            <person name="Wu T."/>
            <person name="Yu G."/>
            <person name="Miranda M."/>
            <person name="Quach H.L."/>
            <person name="Tripp M."/>
            <person name="Chang C.H."/>
            <person name="Lee J.M."/>
            <person name="Toriumi M.J."/>
            <person name="Chan M.M."/>
            <person name="Tang C.C."/>
            <person name="Onodera C.S."/>
            <person name="Deng J.M."/>
            <person name="Akiyama K."/>
            <person name="Ansari Y."/>
            <person name="Arakawa T."/>
            <person name="Banh J."/>
            <person name="Banno F."/>
            <person name="Bowser L."/>
            <person name="Brooks S.Y."/>
            <person name="Carninci P."/>
            <person name="Chao Q."/>
            <person name="Choy N."/>
            <person name="Enju A."/>
            <person name="Goldsmith A.D."/>
            <person name="Gurjal M."/>
            <person name="Hansen N.F."/>
            <person name="Hayashizaki Y."/>
            <person name="Johnson-Hopson C."/>
            <person name="Hsuan V.W."/>
            <person name="Iida K."/>
            <person name="Karnes M."/>
            <person name="Khan S."/>
            <person name="Koesema E."/>
            <person name="Ishida J."/>
            <person name="Jiang P.X."/>
            <person name="Jones T."/>
            <person name="Kawai J."/>
            <person name="Kamiya A."/>
            <person name="Meyers C."/>
            <person name="Nakajima M."/>
            <person name="Narusaka M."/>
            <person name="Seki M."/>
            <person name="Sakurai T."/>
            <person name="Satou M."/>
            <person name="Tamse R."/>
            <person name="Vaysberg M."/>
            <person name="Wallender E.K."/>
            <person name="Wong C."/>
            <person name="Yamamura Y."/>
            <person name="Yuan S."/>
            <person name="Shinozaki K."/>
            <person name="Davis R.W."/>
            <person name="Theologis A."/>
            <person name="Ecker J.R."/>
        </authorList>
    </citation>
    <scope>NUCLEOTIDE SEQUENCE [LARGE SCALE MRNA] (ISOFORM 2)</scope>
    <source>
        <strain>cv. Columbia</strain>
    </source>
</reference>
<reference key="4">
    <citation type="submission" date="2002-03" db="EMBL/GenBank/DDBJ databases">
        <title>Full-length cDNA from Arabidopsis thaliana.</title>
        <authorList>
            <person name="Brover V.V."/>
            <person name="Troukhan M.E."/>
            <person name="Alexandrov N.A."/>
            <person name="Lu Y.-P."/>
            <person name="Flavell R.B."/>
            <person name="Feldmann K.A."/>
        </authorList>
    </citation>
    <scope>NUCLEOTIDE SEQUENCE [LARGE SCALE MRNA] (ISOFORM 1)</scope>
</reference>
<reference key="5">
    <citation type="journal article" date="2001" name="J. Biol. Chem.">
        <title>Phylogenetic analysis of the UDP-glycosyltransferase multigene family of Arabidopsis thaliana.</title>
        <authorList>
            <person name="Li Y."/>
            <person name="Baldauf S."/>
            <person name="Lim E.K."/>
            <person name="Bowles D.J."/>
        </authorList>
    </citation>
    <scope>GENE FAMILY</scope>
</reference>
<proteinExistence type="evidence at transcript level"/>
<gene>
    <name type="primary">UGT90A1</name>
    <name type="ordered locus">At2g16890</name>
    <name type="ORF">F12A24.7</name>
</gene>
<organism>
    <name type="scientific">Arabidopsis thaliana</name>
    <name type="common">Mouse-ear cress</name>
    <dbReference type="NCBI Taxonomy" id="3702"/>
    <lineage>
        <taxon>Eukaryota</taxon>
        <taxon>Viridiplantae</taxon>
        <taxon>Streptophyta</taxon>
        <taxon>Embryophyta</taxon>
        <taxon>Tracheophyta</taxon>
        <taxon>Spermatophyta</taxon>
        <taxon>Magnoliopsida</taxon>
        <taxon>eudicotyledons</taxon>
        <taxon>Gunneridae</taxon>
        <taxon>Pentapetalae</taxon>
        <taxon>rosids</taxon>
        <taxon>malvids</taxon>
        <taxon>Brassicales</taxon>
        <taxon>Brassicaceae</taxon>
        <taxon>Camelineae</taxon>
        <taxon>Arabidopsis</taxon>
    </lineage>
</organism>
<feature type="chain" id="PRO_0000409139" description="UDP-glycosyltransferase 90A1">
    <location>
        <begin position="1"/>
        <end position="478"/>
    </location>
</feature>
<feature type="binding site" evidence="1">
    <location>
        <position position="289"/>
    </location>
    <ligand>
        <name>UDP-alpha-D-glucose</name>
        <dbReference type="ChEBI" id="CHEBI:58885"/>
    </ligand>
</feature>
<feature type="binding site" evidence="1">
    <location>
        <begin position="343"/>
        <end position="345"/>
    </location>
    <ligand>
        <name>UDP-alpha-D-glucose</name>
        <dbReference type="ChEBI" id="CHEBI:58885"/>
    </ligand>
</feature>
<feature type="binding site" evidence="1">
    <location>
        <begin position="360"/>
        <end position="368"/>
    </location>
    <ligand>
        <name>UDP-alpha-D-glucose</name>
        <dbReference type="ChEBI" id="CHEBI:58885"/>
    </ligand>
</feature>
<feature type="binding site" evidence="1">
    <location>
        <begin position="382"/>
        <end position="385"/>
    </location>
    <ligand>
        <name>UDP-alpha-D-glucose</name>
        <dbReference type="ChEBI" id="CHEBI:58885"/>
    </ligand>
</feature>
<feature type="splice variant" id="VSP_041237" description="In isoform 2." evidence="2">
    <original>NF</original>
    <variation>RT</variation>
    <location>
        <begin position="311"/>
        <end position="312"/>
    </location>
</feature>
<feature type="splice variant" id="VSP_041238" description="In isoform 2." evidence="2">
    <location>
        <begin position="313"/>
        <end position="478"/>
    </location>
</feature>
<feature type="sequence conflict" description="In Ref. 4; AAM62706." evidence="3" ref="4">
    <original>F</original>
    <variation>Y</variation>
    <location>
        <position position="15"/>
    </location>
</feature>
<feature type="sequence conflict" description="In Ref. 4; AAM62706." evidence="3" ref="4">
    <original>K</original>
    <variation>R</variation>
    <location>
        <position position="88"/>
    </location>
</feature>
<feature type="sequence conflict" description="In Ref. 4; AAM62706." evidence="3" ref="4">
    <original>V</original>
    <variation>I</variation>
    <location>
        <position position="187"/>
    </location>
</feature>
<feature type="sequence conflict" description="In Ref. 4; AAM62706." evidence="3" ref="4">
    <original>E</original>
    <variation>D</variation>
    <location>
        <position position="466"/>
    </location>
</feature>
<evidence type="ECO:0000250" key="1"/>
<evidence type="ECO:0000303" key="2">
    <source>
    </source>
</evidence>
<evidence type="ECO:0000305" key="3"/>
<dbReference type="EC" id="2.4.1.-"/>
<dbReference type="EMBL" id="AC005167">
    <property type="protein sequence ID" value="AAC64220.1"/>
    <property type="molecule type" value="Genomic_DNA"/>
</dbReference>
<dbReference type="EMBL" id="CP002685">
    <property type="protein sequence ID" value="AEC06548.1"/>
    <property type="molecule type" value="Genomic_DNA"/>
</dbReference>
<dbReference type="EMBL" id="CP002685">
    <property type="protein sequence ID" value="AEC06549.1"/>
    <property type="molecule type" value="Genomic_DNA"/>
</dbReference>
<dbReference type="EMBL" id="CP002685">
    <property type="protein sequence ID" value="ANM61779.1"/>
    <property type="molecule type" value="Genomic_DNA"/>
</dbReference>
<dbReference type="EMBL" id="AY054598">
    <property type="protein sequence ID" value="AAK96789.1"/>
    <property type="molecule type" value="mRNA"/>
</dbReference>
<dbReference type="EMBL" id="BT002606">
    <property type="protein sequence ID" value="AAO00966.1"/>
    <property type="molecule type" value="mRNA"/>
</dbReference>
<dbReference type="EMBL" id="AY085480">
    <property type="protein sequence ID" value="AAM62706.1"/>
    <property type="molecule type" value="mRNA"/>
</dbReference>
<dbReference type="PIR" id="E84545">
    <property type="entry name" value="E84545"/>
</dbReference>
<dbReference type="RefSeq" id="NP_001318233.1">
    <molecule id="Q9ZVX4-2"/>
    <property type="nucleotide sequence ID" value="NM_001335496.1"/>
</dbReference>
<dbReference type="RefSeq" id="NP_179281.3">
    <molecule id="Q9ZVX4-1"/>
    <property type="nucleotide sequence ID" value="NM_127242.4"/>
</dbReference>
<dbReference type="RefSeq" id="NP_850992.1">
    <molecule id="Q9ZVX4-2"/>
    <property type="nucleotide sequence ID" value="NM_180661.2"/>
</dbReference>
<dbReference type="SMR" id="Q9ZVX4"/>
<dbReference type="BioGRID" id="1547">
    <property type="interactions" value="1"/>
</dbReference>
<dbReference type="FunCoup" id="Q9ZVX4">
    <property type="interactions" value="180"/>
</dbReference>
<dbReference type="IntAct" id="Q9ZVX4">
    <property type="interactions" value="1"/>
</dbReference>
<dbReference type="STRING" id="3702.Q9ZVX4"/>
<dbReference type="CAZy" id="GT1">
    <property type="family name" value="Glycosyltransferase Family 1"/>
</dbReference>
<dbReference type="iPTMnet" id="Q9ZVX4"/>
<dbReference type="PaxDb" id="3702-AT2G16890.2"/>
<dbReference type="ProteomicsDB" id="228686">
    <molecule id="Q9ZVX4-1"/>
</dbReference>
<dbReference type="EnsemblPlants" id="AT2G16890.1">
    <molecule id="Q9ZVX4-2"/>
    <property type="protein sequence ID" value="AT2G16890.1"/>
    <property type="gene ID" value="AT2G16890"/>
</dbReference>
<dbReference type="EnsemblPlants" id="AT2G16890.2">
    <molecule id="Q9ZVX4-1"/>
    <property type="protein sequence ID" value="AT2G16890.2"/>
    <property type="gene ID" value="AT2G16890"/>
</dbReference>
<dbReference type="EnsemblPlants" id="AT2G16890.4">
    <molecule id="Q9ZVX4-2"/>
    <property type="protein sequence ID" value="AT2G16890.4"/>
    <property type="gene ID" value="AT2G16890"/>
</dbReference>
<dbReference type="GeneID" id="816190"/>
<dbReference type="Gramene" id="AT2G16890.1">
    <molecule id="Q9ZVX4-2"/>
    <property type="protein sequence ID" value="AT2G16890.1"/>
    <property type="gene ID" value="AT2G16890"/>
</dbReference>
<dbReference type="Gramene" id="AT2G16890.2">
    <molecule id="Q9ZVX4-1"/>
    <property type="protein sequence ID" value="AT2G16890.2"/>
    <property type="gene ID" value="AT2G16890"/>
</dbReference>
<dbReference type="Gramene" id="AT2G16890.4">
    <molecule id="Q9ZVX4-2"/>
    <property type="protein sequence ID" value="AT2G16890.4"/>
    <property type="gene ID" value="AT2G16890"/>
</dbReference>
<dbReference type="KEGG" id="ath:AT2G16890"/>
<dbReference type="Araport" id="AT2G16890"/>
<dbReference type="TAIR" id="AT2G16890"/>
<dbReference type="eggNOG" id="KOG1192">
    <property type="taxonomic scope" value="Eukaryota"/>
</dbReference>
<dbReference type="HOGENOM" id="CLU_001724_2_2_1"/>
<dbReference type="InParanoid" id="Q9ZVX4"/>
<dbReference type="OMA" id="CAFHEPA"/>
<dbReference type="PhylomeDB" id="Q9ZVX4"/>
<dbReference type="BioCyc" id="ARA:AT2G16890-MONOMER"/>
<dbReference type="PRO" id="PR:Q9ZVX4"/>
<dbReference type="Proteomes" id="UP000006548">
    <property type="component" value="Chromosome 2"/>
</dbReference>
<dbReference type="ExpressionAtlas" id="Q9ZVX4">
    <property type="expression patterns" value="baseline and differential"/>
</dbReference>
<dbReference type="GO" id="GO:0046527">
    <property type="term" value="F:glucosyltransferase activity"/>
    <property type="evidence" value="ECO:0007669"/>
    <property type="project" value="UniProtKB-ARBA"/>
</dbReference>
<dbReference type="GO" id="GO:0008194">
    <property type="term" value="F:UDP-glycosyltransferase activity"/>
    <property type="evidence" value="ECO:0007669"/>
    <property type="project" value="InterPro"/>
</dbReference>
<dbReference type="CDD" id="cd03784">
    <property type="entry name" value="GT1_Gtf-like"/>
    <property type="match status" value="1"/>
</dbReference>
<dbReference type="FunFam" id="3.40.50.2000:FF:000107">
    <property type="entry name" value="Glycosyltransferase"/>
    <property type="match status" value="1"/>
</dbReference>
<dbReference type="FunFam" id="3.40.50.2000:FF:000301">
    <property type="entry name" value="Glycosyltransferase"/>
    <property type="match status" value="1"/>
</dbReference>
<dbReference type="Gene3D" id="3.40.50.2000">
    <property type="entry name" value="Glycogen Phosphorylase B"/>
    <property type="match status" value="2"/>
</dbReference>
<dbReference type="InterPro" id="IPR002999">
    <property type="entry name" value="Tudor"/>
</dbReference>
<dbReference type="InterPro" id="IPR002213">
    <property type="entry name" value="UDP_glucos_trans"/>
</dbReference>
<dbReference type="InterPro" id="IPR035595">
    <property type="entry name" value="UDP_glycos_trans_CS"/>
</dbReference>
<dbReference type="PANTHER" id="PTHR48047">
    <property type="entry name" value="GLYCOSYLTRANSFERASE"/>
    <property type="match status" value="1"/>
</dbReference>
<dbReference type="PANTHER" id="PTHR48047:SF214">
    <property type="entry name" value="UDP-GLYCOSYLTRANSFERASE 90A1"/>
    <property type="match status" value="1"/>
</dbReference>
<dbReference type="Pfam" id="PF00201">
    <property type="entry name" value="UDPGT"/>
    <property type="match status" value="1"/>
</dbReference>
<dbReference type="SUPFAM" id="SSF53756">
    <property type="entry name" value="UDP-Glycosyltransferase/glycogen phosphorylase"/>
    <property type="match status" value="1"/>
</dbReference>
<dbReference type="PROSITE" id="PS00375">
    <property type="entry name" value="UDPGT"/>
    <property type="match status" value="1"/>
</dbReference>
<name>U90A1_ARATH</name>
<sequence length="478" mass="53747">MSVSTHHHHVVLFPFMSKGHIIPLLQFGRLLLRHHRKEPTITVTVFTTPKNQPFISDFLSDTPEIKVISLPFPENITGIPPGVENTEKLPSMSLFVPFTRATKLLQPFFEETLKTLPKVSFMVSDGFLWWTSESAAKFNIPRFVSYGMNSYSAAVSISVFKHELFTEPESKSDTEPVTVPDFPWIKVKKCDFDHGTTEPEESGAALELSMDQIKSTTTSHGFLVNSFYELESAFVDYNNNSGDKPKSWCVGPLCLTDPPKQGSAKPAWIHWLDQKREEGRPVLYVAFGTQAEISNKQLMELAFGLEDSKVNFLWVTRKDVEEIIGEGFNDRIRESGMIVRDWVDQWEILSHESVKGFLSHCGWNSAQESICVGVPLLAWPMMAEQPLNAKMVVEEIKVGVRVETEDGSVKGFVTREELSGKIKELMEGETGKTARKNVKEYSKMAKAALVEGTGSSWKNLDMILKELCKSRDSNGASE</sequence>
<comment type="alternative products">
    <event type="alternative splicing"/>
    <isoform>
        <id>Q9ZVX4-1</id>
        <name>1</name>
        <sequence type="displayed"/>
    </isoform>
    <isoform>
        <id>Q9ZVX4-2</id>
        <name>2</name>
        <sequence type="described" ref="VSP_041237 VSP_041238"/>
    </isoform>
</comment>
<comment type="similarity">
    <text evidence="3">Belongs to the UDP-glycosyltransferase family.</text>
</comment>